<organism>
    <name type="scientific">Mycobacterium tuberculosis (strain ATCC 25177 / H37Ra)</name>
    <dbReference type="NCBI Taxonomy" id="419947"/>
    <lineage>
        <taxon>Bacteria</taxon>
        <taxon>Bacillati</taxon>
        <taxon>Actinomycetota</taxon>
        <taxon>Actinomycetes</taxon>
        <taxon>Mycobacteriales</taxon>
        <taxon>Mycobacteriaceae</taxon>
        <taxon>Mycobacterium</taxon>
        <taxon>Mycobacterium tuberculosis complex</taxon>
    </lineage>
</organism>
<accession>A5U095</accession>
<keyword id="KW-0002">3D-structure</keyword>
<keyword id="KW-1185">Reference proteome</keyword>
<keyword id="KW-0687">Ribonucleoprotein</keyword>
<keyword id="KW-0689">Ribosomal protein</keyword>
<name>RL29_MYCTA</name>
<comment type="similarity">
    <text evidence="1">Belongs to the universal ribosomal protein uL29 family.</text>
</comment>
<reference key="1">
    <citation type="journal article" date="2008" name="PLoS ONE">
        <title>Genetic basis of virulence attenuation revealed by comparative genomic analysis of Mycobacterium tuberculosis strain H37Ra versus H37Rv.</title>
        <authorList>
            <person name="Zheng H."/>
            <person name="Lu L."/>
            <person name="Wang B."/>
            <person name="Pu S."/>
            <person name="Zhang X."/>
            <person name="Zhu G."/>
            <person name="Shi W."/>
            <person name="Zhang L."/>
            <person name="Wang H."/>
            <person name="Wang S."/>
            <person name="Zhao G."/>
            <person name="Zhang Y."/>
        </authorList>
    </citation>
    <scope>NUCLEOTIDE SEQUENCE [LARGE SCALE GENOMIC DNA]</scope>
    <source>
        <strain>ATCC 25177 / H37Ra</strain>
    </source>
</reference>
<dbReference type="EMBL" id="CP000611">
    <property type="protein sequence ID" value="ABQ72445.1"/>
    <property type="molecule type" value="Genomic_DNA"/>
</dbReference>
<dbReference type="RefSeq" id="WP_003403594.1">
    <property type="nucleotide sequence ID" value="NZ_CP016972.1"/>
</dbReference>
<dbReference type="PDB" id="7F0D">
    <property type="method" value="EM"/>
    <property type="resolution" value="3.30 A"/>
    <property type="chains" value="Y=1-77"/>
</dbReference>
<dbReference type="PDBsum" id="7F0D"/>
<dbReference type="SMR" id="A5U095"/>
<dbReference type="GeneID" id="45424674"/>
<dbReference type="KEGG" id="mra:MRA_0717"/>
<dbReference type="eggNOG" id="COG0255">
    <property type="taxonomic scope" value="Bacteria"/>
</dbReference>
<dbReference type="HOGENOM" id="CLU_158491_3_3_11"/>
<dbReference type="Proteomes" id="UP000001988">
    <property type="component" value="Chromosome"/>
</dbReference>
<dbReference type="GO" id="GO:0022625">
    <property type="term" value="C:cytosolic large ribosomal subunit"/>
    <property type="evidence" value="ECO:0007669"/>
    <property type="project" value="TreeGrafter"/>
</dbReference>
<dbReference type="GO" id="GO:0003735">
    <property type="term" value="F:structural constituent of ribosome"/>
    <property type="evidence" value="ECO:0007669"/>
    <property type="project" value="InterPro"/>
</dbReference>
<dbReference type="GO" id="GO:0006412">
    <property type="term" value="P:translation"/>
    <property type="evidence" value="ECO:0007669"/>
    <property type="project" value="UniProtKB-UniRule"/>
</dbReference>
<dbReference type="CDD" id="cd00427">
    <property type="entry name" value="Ribosomal_L29_HIP"/>
    <property type="match status" value="1"/>
</dbReference>
<dbReference type="FunFam" id="1.10.287.310:FF:000001">
    <property type="entry name" value="50S ribosomal protein L29"/>
    <property type="match status" value="1"/>
</dbReference>
<dbReference type="Gene3D" id="1.10.287.310">
    <property type="match status" value="1"/>
</dbReference>
<dbReference type="HAMAP" id="MF_00374">
    <property type="entry name" value="Ribosomal_uL29"/>
    <property type="match status" value="1"/>
</dbReference>
<dbReference type="InterPro" id="IPR050063">
    <property type="entry name" value="Ribosomal_protein_uL29"/>
</dbReference>
<dbReference type="InterPro" id="IPR001854">
    <property type="entry name" value="Ribosomal_uL29"/>
</dbReference>
<dbReference type="InterPro" id="IPR018254">
    <property type="entry name" value="Ribosomal_uL29_CS"/>
</dbReference>
<dbReference type="InterPro" id="IPR036049">
    <property type="entry name" value="Ribosomal_uL29_sf"/>
</dbReference>
<dbReference type="NCBIfam" id="TIGR00012">
    <property type="entry name" value="L29"/>
    <property type="match status" value="1"/>
</dbReference>
<dbReference type="PANTHER" id="PTHR10916">
    <property type="entry name" value="60S RIBOSOMAL PROTEIN L35/50S RIBOSOMAL PROTEIN L29"/>
    <property type="match status" value="1"/>
</dbReference>
<dbReference type="PANTHER" id="PTHR10916:SF0">
    <property type="entry name" value="LARGE RIBOSOMAL SUBUNIT PROTEIN UL29C"/>
    <property type="match status" value="1"/>
</dbReference>
<dbReference type="Pfam" id="PF00831">
    <property type="entry name" value="Ribosomal_L29"/>
    <property type="match status" value="1"/>
</dbReference>
<dbReference type="SUPFAM" id="SSF46561">
    <property type="entry name" value="Ribosomal protein L29 (L29p)"/>
    <property type="match status" value="1"/>
</dbReference>
<dbReference type="PROSITE" id="PS00579">
    <property type="entry name" value="RIBOSOMAL_L29"/>
    <property type="match status" value="1"/>
</dbReference>
<sequence>MAVGVSPGELRELTDEELAERLRESKEELFNLRFQMATGQLNNNRRLRTVRQEIARIYTVLRERELGLATGPDGKES</sequence>
<gene>
    <name evidence="1" type="primary">rpmC</name>
    <name type="ordered locus">MRA_0717</name>
</gene>
<protein>
    <recommendedName>
        <fullName evidence="1">Large ribosomal subunit protein uL29</fullName>
    </recommendedName>
    <alternativeName>
        <fullName evidence="2">50S ribosomal protein L29</fullName>
    </alternativeName>
</protein>
<proteinExistence type="evidence at protein level"/>
<evidence type="ECO:0000255" key="1">
    <source>
        <dbReference type="HAMAP-Rule" id="MF_00374"/>
    </source>
</evidence>
<evidence type="ECO:0000305" key="2"/>
<evidence type="ECO:0007829" key="3">
    <source>
        <dbReference type="PDB" id="7F0D"/>
    </source>
</evidence>
<feature type="chain" id="PRO_1000007535" description="Large ribosomal subunit protein uL29">
    <location>
        <begin position="1"/>
        <end position="77"/>
    </location>
</feature>
<feature type="helix" evidence="3">
    <location>
        <begin position="9"/>
        <end position="12"/>
    </location>
</feature>
<feature type="helix" evidence="3">
    <location>
        <begin position="16"/>
        <end position="37"/>
    </location>
</feature>
<feature type="helix" evidence="3">
    <location>
        <begin position="46"/>
        <end position="65"/>
    </location>
</feature>